<reference key="1">
    <citation type="journal article" date="2006" name="J. Bacteriol.">
        <title>Whole-genome sequence of Listeria welshimeri reveals common steps in genome reduction with Listeria innocua as compared to Listeria monocytogenes.</title>
        <authorList>
            <person name="Hain T."/>
            <person name="Steinweg C."/>
            <person name="Kuenne C.T."/>
            <person name="Billion A."/>
            <person name="Ghai R."/>
            <person name="Chatterjee S.S."/>
            <person name="Domann E."/>
            <person name="Kaerst U."/>
            <person name="Goesmann A."/>
            <person name="Bekel T."/>
            <person name="Bartels D."/>
            <person name="Kaiser O."/>
            <person name="Meyer F."/>
            <person name="Puehler A."/>
            <person name="Weisshaar B."/>
            <person name="Wehland J."/>
            <person name="Liang C."/>
            <person name="Dandekar T."/>
            <person name="Lampidis R."/>
            <person name="Kreft J."/>
            <person name="Goebel W."/>
            <person name="Chakraborty T."/>
        </authorList>
    </citation>
    <scope>NUCLEOTIDE SEQUENCE [LARGE SCALE GENOMIC DNA]</scope>
    <source>
        <strain>ATCC 35897 / DSM 20650 / CCUG 15529 / CIP 8149 / NCTC 11857 / SLCC 5334 / V8</strain>
    </source>
</reference>
<feature type="chain" id="PRO_1000055623" description="Large ribosomal subunit protein uL14">
    <location>
        <begin position="1"/>
        <end position="122"/>
    </location>
</feature>
<proteinExistence type="inferred from homology"/>
<comment type="function">
    <text evidence="1">Binds to 23S rRNA. Forms part of two intersubunit bridges in the 70S ribosome.</text>
</comment>
<comment type="subunit">
    <text evidence="1">Part of the 50S ribosomal subunit. Forms a cluster with proteins L3 and L19. In the 70S ribosome, L14 and L19 interact and together make contacts with the 16S rRNA in bridges B5 and B8.</text>
</comment>
<comment type="similarity">
    <text evidence="1">Belongs to the universal ribosomal protein uL14 family.</text>
</comment>
<evidence type="ECO:0000255" key="1">
    <source>
        <dbReference type="HAMAP-Rule" id="MF_01367"/>
    </source>
</evidence>
<evidence type="ECO:0000305" key="2"/>
<gene>
    <name evidence="1" type="primary">rplN</name>
    <name type="ordered locus">lwe2572</name>
</gene>
<keyword id="KW-0687">Ribonucleoprotein</keyword>
<keyword id="KW-0689">Ribosomal protein</keyword>
<keyword id="KW-0694">RNA-binding</keyword>
<keyword id="KW-0699">rRNA-binding</keyword>
<protein>
    <recommendedName>
        <fullName evidence="1">Large ribosomal subunit protein uL14</fullName>
    </recommendedName>
    <alternativeName>
        <fullName evidence="2">50S ribosomal protein L14</fullName>
    </alternativeName>
</protein>
<name>RL14_LISW6</name>
<dbReference type="EMBL" id="AM263198">
    <property type="protein sequence ID" value="CAK21990.1"/>
    <property type="molecule type" value="Genomic_DNA"/>
</dbReference>
<dbReference type="RefSeq" id="WP_003723686.1">
    <property type="nucleotide sequence ID" value="NC_008555.1"/>
</dbReference>
<dbReference type="SMR" id="A0ALV8"/>
<dbReference type="STRING" id="386043.lwe2572"/>
<dbReference type="GeneID" id="93240503"/>
<dbReference type="KEGG" id="lwe:lwe2572"/>
<dbReference type="eggNOG" id="COG0093">
    <property type="taxonomic scope" value="Bacteria"/>
</dbReference>
<dbReference type="HOGENOM" id="CLU_095071_2_1_9"/>
<dbReference type="OrthoDB" id="9806379at2"/>
<dbReference type="Proteomes" id="UP000000779">
    <property type="component" value="Chromosome"/>
</dbReference>
<dbReference type="GO" id="GO:0022625">
    <property type="term" value="C:cytosolic large ribosomal subunit"/>
    <property type="evidence" value="ECO:0007669"/>
    <property type="project" value="TreeGrafter"/>
</dbReference>
<dbReference type="GO" id="GO:0070180">
    <property type="term" value="F:large ribosomal subunit rRNA binding"/>
    <property type="evidence" value="ECO:0007669"/>
    <property type="project" value="TreeGrafter"/>
</dbReference>
<dbReference type="GO" id="GO:0003735">
    <property type="term" value="F:structural constituent of ribosome"/>
    <property type="evidence" value="ECO:0007669"/>
    <property type="project" value="InterPro"/>
</dbReference>
<dbReference type="GO" id="GO:0006412">
    <property type="term" value="P:translation"/>
    <property type="evidence" value="ECO:0007669"/>
    <property type="project" value="UniProtKB-UniRule"/>
</dbReference>
<dbReference type="CDD" id="cd00337">
    <property type="entry name" value="Ribosomal_uL14"/>
    <property type="match status" value="1"/>
</dbReference>
<dbReference type="FunFam" id="2.40.150.20:FF:000001">
    <property type="entry name" value="50S ribosomal protein L14"/>
    <property type="match status" value="1"/>
</dbReference>
<dbReference type="Gene3D" id="2.40.150.20">
    <property type="entry name" value="Ribosomal protein L14"/>
    <property type="match status" value="1"/>
</dbReference>
<dbReference type="HAMAP" id="MF_01367">
    <property type="entry name" value="Ribosomal_uL14"/>
    <property type="match status" value="1"/>
</dbReference>
<dbReference type="InterPro" id="IPR000218">
    <property type="entry name" value="Ribosomal_uL14"/>
</dbReference>
<dbReference type="InterPro" id="IPR005745">
    <property type="entry name" value="Ribosomal_uL14_bac-type"/>
</dbReference>
<dbReference type="InterPro" id="IPR019972">
    <property type="entry name" value="Ribosomal_uL14_CS"/>
</dbReference>
<dbReference type="InterPro" id="IPR036853">
    <property type="entry name" value="Ribosomal_uL14_sf"/>
</dbReference>
<dbReference type="NCBIfam" id="TIGR01067">
    <property type="entry name" value="rplN_bact"/>
    <property type="match status" value="1"/>
</dbReference>
<dbReference type="PANTHER" id="PTHR11761">
    <property type="entry name" value="50S/60S RIBOSOMAL PROTEIN L14/L23"/>
    <property type="match status" value="1"/>
</dbReference>
<dbReference type="PANTHER" id="PTHR11761:SF3">
    <property type="entry name" value="LARGE RIBOSOMAL SUBUNIT PROTEIN UL14M"/>
    <property type="match status" value="1"/>
</dbReference>
<dbReference type="Pfam" id="PF00238">
    <property type="entry name" value="Ribosomal_L14"/>
    <property type="match status" value="1"/>
</dbReference>
<dbReference type="SMART" id="SM01374">
    <property type="entry name" value="Ribosomal_L14"/>
    <property type="match status" value="1"/>
</dbReference>
<dbReference type="SUPFAM" id="SSF50193">
    <property type="entry name" value="Ribosomal protein L14"/>
    <property type="match status" value="1"/>
</dbReference>
<dbReference type="PROSITE" id="PS00049">
    <property type="entry name" value="RIBOSOMAL_L14"/>
    <property type="match status" value="1"/>
</dbReference>
<organism>
    <name type="scientific">Listeria welshimeri serovar 6b (strain ATCC 35897 / DSM 20650 / CCUG 15529 / CIP 8149 / NCTC 11857 / SLCC 5334 / V8)</name>
    <dbReference type="NCBI Taxonomy" id="386043"/>
    <lineage>
        <taxon>Bacteria</taxon>
        <taxon>Bacillati</taxon>
        <taxon>Bacillota</taxon>
        <taxon>Bacilli</taxon>
        <taxon>Bacillales</taxon>
        <taxon>Listeriaceae</taxon>
        <taxon>Listeria</taxon>
    </lineage>
</organism>
<accession>A0ALV8</accession>
<sequence>MIQQESRMKVADNSGAREVLTIKVLGGSGRKTANIGDVVVCTVKQATPGGVVKKGEVVKAVIVRTKSGARRQDGSYIKFDENACVIIRDDKSPRGTRIFGPVARELRENNFMKIVSLAPEVL</sequence>